<dbReference type="EC" id="2.8.4.3" evidence="1"/>
<dbReference type="EMBL" id="CP000350">
    <property type="protein sequence ID" value="ABJ75517.1"/>
    <property type="molecule type" value="Genomic_DNA"/>
</dbReference>
<dbReference type="RefSeq" id="WP_002750674.1">
    <property type="nucleotide sequence ID" value="NC_008510.1"/>
</dbReference>
<dbReference type="SMR" id="Q04UA3"/>
<dbReference type="KEGG" id="lbj:LBJ_0869"/>
<dbReference type="HOGENOM" id="CLU_018697_2_0_12"/>
<dbReference type="Proteomes" id="UP000000656">
    <property type="component" value="Chromosome 1"/>
</dbReference>
<dbReference type="GO" id="GO:0005829">
    <property type="term" value="C:cytosol"/>
    <property type="evidence" value="ECO:0007669"/>
    <property type="project" value="TreeGrafter"/>
</dbReference>
<dbReference type="GO" id="GO:0051539">
    <property type="term" value="F:4 iron, 4 sulfur cluster binding"/>
    <property type="evidence" value="ECO:0007669"/>
    <property type="project" value="UniProtKB-UniRule"/>
</dbReference>
<dbReference type="GO" id="GO:0046872">
    <property type="term" value="F:metal ion binding"/>
    <property type="evidence" value="ECO:0007669"/>
    <property type="project" value="UniProtKB-KW"/>
</dbReference>
<dbReference type="GO" id="GO:0035597">
    <property type="term" value="F:N6-isopentenyladenosine methylthiotransferase activity"/>
    <property type="evidence" value="ECO:0007669"/>
    <property type="project" value="TreeGrafter"/>
</dbReference>
<dbReference type="CDD" id="cd01335">
    <property type="entry name" value="Radical_SAM"/>
    <property type="match status" value="1"/>
</dbReference>
<dbReference type="FunFam" id="3.40.50.12160:FF:000003">
    <property type="entry name" value="CDK5 regulatory subunit-associated protein 1"/>
    <property type="match status" value="1"/>
</dbReference>
<dbReference type="FunFam" id="3.80.30.20:FF:000001">
    <property type="entry name" value="tRNA-2-methylthio-N(6)-dimethylallyladenosine synthase 2"/>
    <property type="match status" value="1"/>
</dbReference>
<dbReference type="Gene3D" id="3.40.50.12160">
    <property type="entry name" value="Methylthiotransferase, N-terminal domain"/>
    <property type="match status" value="1"/>
</dbReference>
<dbReference type="Gene3D" id="3.80.30.20">
    <property type="entry name" value="tm_1862 like domain"/>
    <property type="match status" value="1"/>
</dbReference>
<dbReference type="HAMAP" id="MF_01864">
    <property type="entry name" value="tRNA_metthiotr_MiaB"/>
    <property type="match status" value="1"/>
</dbReference>
<dbReference type="InterPro" id="IPR006638">
    <property type="entry name" value="Elp3/MiaA/NifB-like_rSAM"/>
</dbReference>
<dbReference type="InterPro" id="IPR005839">
    <property type="entry name" value="Methylthiotransferase"/>
</dbReference>
<dbReference type="InterPro" id="IPR020612">
    <property type="entry name" value="Methylthiotransferase_CS"/>
</dbReference>
<dbReference type="InterPro" id="IPR013848">
    <property type="entry name" value="Methylthiotransferase_N"/>
</dbReference>
<dbReference type="InterPro" id="IPR038135">
    <property type="entry name" value="Methylthiotransferase_N_sf"/>
</dbReference>
<dbReference type="InterPro" id="IPR006463">
    <property type="entry name" value="MiaB_methiolase"/>
</dbReference>
<dbReference type="InterPro" id="IPR007197">
    <property type="entry name" value="rSAM"/>
</dbReference>
<dbReference type="InterPro" id="IPR023404">
    <property type="entry name" value="rSAM_horseshoe"/>
</dbReference>
<dbReference type="InterPro" id="IPR002792">
    <property type="entry name" value="TRAM_dom"/>
</dbReference>
<dbReference type="NCBIfam" id="TIGR01574">
    <property type="entry name" value="miaB-methiolase"/>
    <property type="match status" value="1"/>
</dbReference>
<dbReference type="NCBIfam" id="TIGR00089">
    <property type="entry name" value="MiaB/RimO family radical SAM methylthiotransferase"/>
    <property type="match status" value="1"/>
</dbReference>
<dbReference type="PANTHER" id="PTHR43020">
    <property type="entry name" value="CDK5 REGULATORY SUBUNIT-ASSOCIATED PROTEIN 1"/>
    <property type="match status" value="1"/>
</dbReference>
<dbReference type="PANTHER" id="PTHR43020:SF2">
    <property type="entry name" value="MITOCHONDRIAL TRNA METHYLTHIOTRANSFERASE CDK5RAP1"/>
    <property type="match status" value="1"/>
</dbReference>
<dbReference type="Pfam" id="PF04055">
    <property type="entry name" value="Radical_SAM"/>
    <property type="match status" value="1"/>
</dbReference>
<dbReference type="Pfam" id="PF01938">
    <property type="entry name" value="TRAM"/>
    <property type="match status" value="1"/>
</dbReference>
<dbReference type="Pfam" id="PF00919">
    <property type="entry name" value="UPF0004"/>
    <property type="match status" value="1"/>
</dbReference>
<dbReference type="SFLD" id="SFLDF00273">
    <property type="entry name" value="(dimethylallyl)adenosine_tRNA"/>
    <property type="match status" value="1"/>
</dbReference>
<dbReference type="SFLD" id="SFLDG01082">
    <property type="entry name" value="B12-binding_domain_containing"/>
    <property type="match status" value="1"/>
</dbReference>
<dbReference type="SFLD" id="SFLDF00413">
    <property type="entry name" value="CDK5RAP1"/>
    <property type="match status" value="1"/>
</dbReference>
<dbReference type="SFLD" id="SFLDS00029">
    <property type="entry name" value="Radical_SAM"/>
    <property type="match status" value="1"/>
</dbReference>
<dbReference type="SMART" id="SM00729">
    <property type="entry name" value="Elp3"/>
    <property type="match status" value="1"/>
</dbReference>
<dbReference type="SUPFAM" id="SSF102114">
    <property type="entry name" value="Radical SAM enzymes"/>
    <property type="match status" value="1"/>
</dbReference>
<dbReference type="PROSITE" id="PS51449">
    <property type="entry name" value="MTTASE_N"/>
    <property type="match status" value="1"/>
</dbReference>
<dbReference type="PROSITE" id="PS01278">
    <property type="entry name" value="MTTASE_RADICAL"/>
    <property type="match status" value="1"/>
</dbReference>
<dbReference type="PROSITE" id="PS51918">
    <property type="entry name" value="RADICAL_SAM"/>
    <property type="match status" value="1"/>
</dbReference>
<dbReference type="PROSITE" id="PS50926">
    <property type="entry name" value="TRAM"/>
    <property type="match status" value="1"/>
</dbReference>
<feature type="chain" id="PRO_0000374360" description="tRNA-2-methylthio-N(6)-dimethylallyladenosine synthase">
    <location>
        <begin position="1"/>
        <end position="449"/>
    </location>
</feature>
<feature type="domain" description="MTTase N-terminal" evidence="1">
    <location>
        <begin position="11"/>
        <end position="127"/>
    </location>
</feature>
<feature type="domain" description="Radical SAM core" evidence="2">
    <location>
        <begin position="150"/>
        <end position="378"/>
    </location>
</feature>
<feature type="domain" description="TRAM" evidence="1">
    <location>
        <begin position="381"/>
        <end position="449"/>
    </location>
</feature>
<feature type="binding site" evidence="1">
    <location>
        <position position="20"/>
    </location>
    <ligand>
        <name>[4Fe-4S] cluster</name>
        <dbReference type="ChEBI" id="CHEBI:49883"/>
        <label>1</label>
    </ligand>
</feature>
<feature type="binding site" evidence="1">
    <location>
        <position position="56"/>
    </location>
    <ligand>
        <name>[4Fe-4S] cluster</name>
        <dbReference type="ChEBI" id="CHEBI:49883"/>
        <label>1</label>
    </ligand>
</feature>
<feature type="binding site" evidence="1">
    <location>
        <position position="90"/>
    </location>
    <ligand>
        <name>[4Fe-4S] cluster</name>
        <dbReference type="ChEBI" id="CHEBI:49883"/>
        <label>1</label>
    </ligand>
</feature>
<feature type="binding site" evidence="1">
    <location>
        <position position="164"/>
    </location>
    <ligand>
        <name>[4Fe-4S] cluster</name>
        <dbReference type="ChEBI" id="CHEBI:49883"/>
        <label>2</label>
        <note>4Fe-4S-S-AdoMet</note>
    </ligand>
</feature>
<feature type="binding site" evidence="1">
    <location>
        <position position="168"/>
    </location>
    <ligand>
        <name>[4Fe-4S] cluster</name>
        <dbReference type="ChEBI" id="CHEBI:49883"/>
        <label>2</label>
        <note>4Fe-4S-S-AdoMet</note>
    </ligand>
</feature>
<feature type="binding site" evidence="1">
    <location>
        <position position="171"/>
    </location>
    <ligand>
        <name>[4Fe-4S] cluster</name>
        <dbReference type="ChEBI" id="CHEBI:49883"/>
        <label>2</label>
        <note>4Fe-4S-S-AdoMet</note>
    </ligand>
</feature>
<comment type="function">
    <text evidence="1">Catalyzes the methylthiolation of N6-(dimethylallyl)adenosine (i(6)A), leading to the formation of 2-methylthio-N6-(dimethylallyl)adenosine (ms(2)i(6)A) at position 37 in tRNAs that read codons beginning with uridine.</text>
</comment>
<comment type="catalytic activity">
    <reaction evidence="1">
        <text>N(6)-dimethylallyladenosine(37) in tRNA + (sulfur carrier)-SH + AH2 + 2 S-adenosyl-L-methionine = 2-methylsulfanyl-N(6)-dimethylallyladenosine(37) in tRNA + (sulfur carrier)-H + 5'-deoxyadenosine + L-methionine + A + S-adenosyl-L-homocysteine + 2 H(+)</text>
        <dbReference type="Rhea" id="RHEA:37067"/>
        <dbReference type="Rhea" id="RHEA-COMP:10375"/>
        <dbReference type="Rhea" id="RHEA-COMP:10376"/>
        <dbReference type="Rhea" id="RHEA-COMP:14737"/>
        <dbReference type="Rhea" id="RHEA-COMP:14739"/>
        <dbReference type="ChEBI" id="CHEBI:13193"/>
        <dbReference type="ChEBI" id="CHEBI:15378"/>
        <dbReference type="ChEBI" id="CHEBI:17319"/>
        <dbReference type="ChEBI" id="CHEBI:17499"/>
        <dbReference type="ChEBI" id="CHEBI:29917"/>
        <dbReference type="ChEBI" id="CHEBI:57844"/>
        <dbReference type="ChEBI" id="CHEBI:57856"/>
        <dbReference type="ChEBI" id="CHEBI:59789"/>
        <dbReference type="ChEBI" id="CHEBI:64428"/>
        <dbReference type="ChEBI" id="CHEBI:74415"/>
        <dbReference type="ChEBI" id="CHEBI:74417"/>
        <dbReference type="EC" id="2.8.4.3"/>
    </reaction>
</comment>
<comment type="cofactor">
    <cofactor evidence="1">
        <name>[4Fe-4S] cluster</name>
        <dbReference type="ChEBI" id="CHEBI:49883"/>
    </cofactor>
    <text evidence="1">Binds 2 [4Fe-4S] clusters. One cluster is coordinated with 3 cysteines and an exchangeable S-adenosyl-L-methionine.</text>
</comment>
<comment type="subunit">
    <text evidence="1">Monomer.</text>
</comment>
<comment type="subcellular location">
    <subcellularLocation>
        <location evidence="1">Cytoplasm</location>
    </subcellularLocation>
</comment>
<comment type="similarity">
    <text evidence="1">Belongs to the methylthiotransferase family. MiaB subfamily.</text>
</comment>
<organism>
    <name type="scientific">Leptospira borgpetersenii serovar Hardjo-bovis (strain JB197)</name>
    <dbReference type="NCBI Taxonomy" id="355277"/>
    <lineage>
        <taxon>Bacteria</taxon>
        <taxon>Pseudomonadati</taxon>
        <taxon>Spirochaetota</taxon>
        <taxon>Spirochaetia</taxon>
        <taxon>Leptospirales</taxon>
        <taxon>Leptospiraceae</taxon>
        <taxon>Leptospira</taxon>
    </lineage>
</organism>
<accession>Q04UA3</accession>
<gene>
    <name evidence="1" type="primary">miaB</name>
    <name type="ordered locus">LBJ_0869</name>
</gene>
<evidence type="ECO:0000255" key="1">
    <source>
        <dbReference type="HAMAP-Rule" id="MF_01864"/>
    </source>
</evidence>
<evidence type="ECO:0000255" key="2">
    <source>
        <dbReference type="PROSITE-ProRule" id="PRU01266"/>
    </source>
</evidence>
<keyword id="KW-0004">4Fe-4S</keyword>
<keyword id="KW-0963">Cytoplasm</keyword>
<keyword id="KW-0408">Iron</keyword>
<keyword id="KW-0411">Iron-sulfur</keyword>
<keyword id="KW-0479">Metal-binding</keyword>
<keyword id="KW-0949">S-adenosyl-L-methionine</keyword>
<keyword id="KW-0808">Transferase</keyword>
<keyword id="KW-0819">tRNA processing</keyword>
<reference key="1">
    <citation type="journal article" date="2006" name="Proc. Natl. Acad. Sci. U.S.A.">
        <title>Genome reduction in Leptospira borgpetersenii reflects limited transmission potential.</title>
        <authorList>
            <person name="Bulach D.M."/>
            <person name="Zuerner R.L."/>
            <person name="Wilson P."/>
            <person name="Seemann T."/>
            <person name="McGrath A."/>
            <person name="Cullen P.A."/>
            <person name="Davis J."/>
            <person name="Johnson M."/>
            <person name="Kuczek E."/>
            <person name="Alt D.P."/>
            <person name="Peterson-Burch B."/>
            <person name="Coppel R.L."/>
            <person name="Rood J.I."/>
            <person name="Davies J.K."/>
            <person name="Adler B."/>
        </authorList>
    </citation>
    <scope>NUCLEOTIDE SEQUENCE [LARGE SCALE GENOMIC DNA]</scope>
    <source>
        <strain>JB197</strain>
    </source>
</reference>
<proteinExistence type="inferred from homology"/>
<protein>
    <recommendedName>
        <fullName evidence="1">tRNA-2-methylthio-N(6)-dimethylallyladenosine synthase</fullName>
        <ecNumber evidence="1">2.8.4.3</ecNumber>
    </recommendedName>
    <alternativeName>
        <fullName evidence="1">(Dimethylallyl)adenosine tRNA methylthiotransferase MiaB</fullName>
    </alternativeName>
    <alternativeName>
        <fullName evidence="1">tRNA-i(6)A37 methylthiotransferase</fullName>
    </alternativeName>
</protein>
<sequence length="449" mass="50906">MGVLEREKKTGKVYIETYGCQMNEYDSGIVSSLMKDAEYSSSPDPENSDIIFLNTCAIRENAHAKIYNRLQSLGYLKKRNPELVIGVLGCMAQNLGDDLFHQELPLDLVVGPDNYRSLPELIQRIRSGEHSISLTRLSKIETYDEIEPRVVNGIQAFVTIMRGCNNFCTFCVVPYTRGRERSRDPKSIVREIQDLTEKGIRQVTLLGQNVNSYKEQGTDFAGLIQMLLDETTIERIRFTSPHPKDFPVRLLRLMAQNPRFCPNIHLPLQAGNTRVLEEMKRSYSKEEFLDVVREIRNIVPDVGITTDIIVGFPNETEEEFEDTLAVVREVQFDMAFMFKYSEREGTMARKKLPDNVSEETKSARLTKLVDLQTSISHEQNRARIGRVYSILIENTSRKSEKQLCGRTPCGRMTVFPLPEGRSASEMIGSTVSVRIESATSATLKGGILS</sequence>
<name>MIAB_LEPBJ</name>